<dbReference type="EMBL" id="AF001499">
    <property type="protein sequence ID" value="AAC60124.1"/>
    <property type="molecule type" value="mRNA"/>
</dbReference>
<dbReference type="RefSeq" id="NP_001117098.1">
    <property type="nucleotide sequence ID" value="NM_001123626.1"/>
</dbReference>
<dbReference type="SMR" id="O13018"/>
<dbReference type="STRING" id="8030.ENSSSAP00000076952"/>
<dbReference type="PaxDb" id="8030-ENSSSAP00000076952"/>
<dbReference type="GeneID" id="100136521"/>
<dbReference type="KEGG" id="sasa:100136521"/>
<dbReference type="Proteomes" id="UP000087266">
    <property type="component" value="Chromosome ssa18"/>
</dbReference>
<dbReference type="GO" id="GO:0016020">
    <property type="term" value="C:membrane"/>
    <property type="evidence" value="ECO:0007669"/>
    <property type="project" value="UniProtKB-SubCell"/>
</dbReference>
<dbReference type="GO" id="GO:0004930">
    <property type="term" value="F:G protein-coupled receptor activity"/>
    <property type="evidence" value="ECO:0007669"/>
    <property type="project" value="UniProtKB-KW"/>
</dbReference>
<dbReference type="GO" id="GO:0009881">
    <property type="term" value="F:photoreceptor activity"/>
    <property type="evidence" value="ECO:0000314"/>
    <property type="project" value="AgBase"/>
</dbReference>
<dbReference type="GO" id="GO:0007603">
    <property type="term" value="P:phototransduction, visible light"/>
    <property type="evidence" value="ECO:0000314"/>
    <property type="project" value="AgBase"/>
</dbReference>
<dbReference type="FunFam" id="1.20.1070.10:FF:000238">
    <property type="entry name" value="Opsin-VA"/>
    <property type="match status" value="1"/>
</dbReference>
<dbReference type="Gene3D" id="1.20.1070.10">
    <property type="entry name" value="Rhodopsin 7-helix transmembrane proteins"/>
    <property type="match status" value="1"/>
</dbReference>
<dbReference type="InterPro" id="IPR050125">
    <property type="entry name" value="GPCR_opsins"/>
</dbReference>
<dbReference type="InterPro" id="IPR000276">
    <property type="entry name" value="GPCR_Rhodpsn"/>
</dbReference>
<dbReference type="InterPro" id="IPR017452">
    <property type="entry name" value="GPCR_Rhodpsn_7TM"/>
</dbReference>
<dbReference type="InterPro" id="IPR027430">
    <property type="entry name" value="Retinal_BS"/>
</dbReference>
<dbReference type="PANTHER" id="PTHR24240">
    <property type="entry name" value="OPSIN"/>
    <property type="match status" value="1"/>
</dbReference>
<dbReference type="Pfam" id="PF00001">
    <property type="entry name" value="7tm_1"/>
    <property type="match status" value="1"/>
</dbReference>
<dbReference type="PRINTS" id="PR00237">
    <property type="entry name" value="GPCRRHODOPSN"/>
</dbReference>
<dbReference type="SUPFAM" id="SSF81321">
    <property type="entry name" value="Family A G protein-coupled receptor-like"/>
    <property type="match status" value="1"/>
</dbReference>
<dbReference type="PROSITE" id="PS00237">
    <property type="entry name" value="G_PROTEIN_RECEP_F1_1"/>
    <property type="match status" value="1"/>
</dbReference>
<dbReference type="PROSITE" id="PS50262">
    <property type="entry name" value="G_PROTEIN_RECEP_F1_2"/>
    <property type="match status" value="1"/>
</dbReference>
<dbReference type="PROSITE" id="PS00238">
    <property type="entry name" value="OPSIN"/>
    <property type="match status" value="2"/>
</dbReference>
<proteinExistence type="evidence at protein level"/>
<keyword id="KW-0157">Chromophore</keyword>
<keyword id="KW-1015">Disulfide bond</keyword>
<keyword id="KW-0297">G-protein coupled receptor</keyword>
<keyword id="KW-0325">Glycoprotein</keyword>
<keyword id="KW-0472">Membrane</keyword>
<keyword id="KW-0597">Phosphoprotein</keyword>
<keyword id="KW-0600">Photoreceptor protein</keyword>
<keyword id="KW-0675">Receptor</keyword>
<keyword id="KW-1185">Reference proteome</keyword>
<keyword id="KW-0681">Retinal protein</keyword>
<keyword id="KW-0716">Sensory transduction</keyword>
<keyword id="KW-0807">Transducer</keyword>
<keyword id="KW-0812">Transmembrane</keyword>
<keyword id="KW-1133">Transmembrane helix</keyword>
<comment type="subcellular location">
    <subcellularLocation>
        <location>Membrane</location>
        <topology>Multi-pass membrane protein</topology>
    </subcellularLocation>
</comment>
<comment type="PTM">
    <text evidence="1">Phosphorylated on some or all of the serine and threonine residues present in the C-terminal region.</text>
</comment>
<comment type="similarity">
    <text evidence="3">Belongs to the G-protein coupled receptor 1 family. Opsin subfamily.</text>
</comment>
<organism>
    <name type="scientific">Salmo salar</name>
    <name type="common">Atlantic salmon</name>
    <dbReference type="NCBI Taxonomy" id="8030"/>
    <lineage>
        <taxon>Eukaryota</taxon>
        <taxon>Metazoa</taxon>
        <taxon>Chordata</taxon>
        <taxon>Craniata</taxon>
        <taxon>Vertebrata</taxon>
        <taxon>Euteleostomi</taxon>
        <taxon>Actinopterygii</taxon>
        <taxon>Neopterygii</taxon>
        <taxon>Teleostei</taxon>
        <taxon>Protacanthopterygii</taxon>
        <taxon>Salmoniformes</taxon>
        <taxon>Salmonidae</taxon>
        <taxon>Salmoninae</taxon>
        <taxon>Salmo</taxon>
    </lineage>
</organism>
<accession>O13018</accession>
<evidence type="ECO:0000250" key="1"/>
<evidence type="ECO:0000255" key="2"/>
<evidence type="ECO:0000255" key="3">
    <source>
        <dbReference type="PROSITE-ProRule" id="PRU00521"/>
    </source>
</evidence>
<sequence length="323" mass="36668">MDTLRIAVNGVSYNEASEIYKPHADPFTGPITNLAPWNFAVLATLMFVITSLSLFENFTVMLATYKFKQLRQPLNYIIVNLSLADFLVSLTGGTISFLTNARGYFFLGNWACVLEGFAVTYFGIVAMWSLAVLSFERYFVICRPLGNVRLRGKHAALGLLFVWTFSFIWTIPPVFGWCSYTVSKIGTTCEPNWYSNNIWNHTYIITFFVTCFIMPLGMIIYCYGKLLQKLRKVSHDRLGNAKKPERQVSRMVVVMIVAYLVGWTPYAAFSIIVTACPTIYLDPRLAAAPAFFSKTAAVYNPVIYVFMNKQVSTQLNWGFWSRA</sequence>
<feature type="chain" id="PRO_0000197811" description="Vertebrate ancient opsin">
    <location>
        <begin position="1"/>
        <end position="323"/>
    </location>
</feature>
<feature type="topological domain" description="Extracellular">
    <location>
        <begin position="1"/>
        <end position="38"/>
    </location>
</feature>
<feature type="transmembrane region" description="Helical; Name=1" evidence="2">
    <location>
        <begin position="39"/>
        <end position="63"/>
    </location>
</feature>
<feature type="topological domain" description="Cytoplasmic">
    <location>
        <begin position="64"/>
        <end position="75"/>
    </location>
</feature>
<feature type="transmembrane region" description="Helical; Name=2" evidence="2">
    <location>
        <begin position="76"/>
        <end position="100"/>
    </location>
</feature>
<feature type="topological domain" description="Extracellular">
    <location>
        <begin position="101"/>
        <end position="115"/>
    </location>
</feature>
<feature type="transmembrane region" description="Helical; Name=3" evidence="2">
    <location>
        <begin position="116"/>
        <end position="135"/>
    </location>
</feature>
<feature type="topological domain" description="Cytoplasmic">
    <location>
        <begin position="136"/>
        <end position="154"/>
    </location>
</feature>
<feature type="transmembrane region" description="Helical; Name=4" evidence="2">
    <location>
        <begin position="155"/>
        <end position="178"/>
    </location>
</feature>
<feature type="topological domain" description="Extracellular">
    <location>
        <begin position="179"/>
        <end position="202"/>
    </location>
</feature>
<feature type="transmembrane region" description="Helical; Name=5" evidence="2">
    <location>
        <begin position="203"/>
        <end position="230"/>
    </location>
</feature>
<feature type="topological domain" description="Cytoplasmic">
    <location>
        <begin position="231"/>
        <end position="250"/>
    </location>
</feature>
<feature type="transmembrane region" description="Helical; Name=6" evidence="2">
    <location>
        <begin position="251"/>
        <end position="274"/>
    </location>
</feature>
<feature type="topological domain" description="Extracellular">
    <location>
        <begin position="275"/>
        <end position="282"/>
    </location>
</feature>
<feature type="transmembrane region" description="Helical; Name=7" evidence="2">
    <location>
        <begin position="283"/>
        <end position="307"/>
    </location>
</feature>
<feature type="topological domain" description="Cytoplasmic">
    <location>
        <begin position="308"/>
        <end position="323"/>
    </location>
</feature>
<feature type="modified residue" description="N6-(retinylidene)lysine">
    <location>
        <position position="294"/>
    </location>
</feature>
<feature type="glycosylation site" description="N-linked (GlcNAc...) asparagine" evidence="2">
    <location>
        <position position="200"/>
    </location>
</feature>
<feature type="disulfide bond" evidence="3">
    <location>
        <begin position="112"/>
        <end position="189"/>
    </location>
</feature>
<name>OPSO_SALSA</name>
<protein>
    <recommendedName>
        <fullName>Vertebrate ancient opsin</fullName>
    </recommendedName>
</protein>
<reference key="1">
    <citation type="journal article" date="1997" name="FEBS Lett.">
        <title>A novel and ancient vertebrate opsin.</title>
        <authorList>
            <person name="Soni B.G."/>
            <person name="Foster R.G."/>
        </authorList>
    </citation>
    <scope>NUCLEOTIDE SEQUENCE [MRNA]</scope>
    <source>
        <tissue>Eye</tissue>
    </source>
</reference>